<gene>
    <name evidence="1" type="primary">rpmF</name>
    <name type="ordered locus">Noc_1669</name>
</gene>
<organism>
    <name type="scientific">Nitrosococcus oceani (strain ATCC 19707 / BCRC 17464 / JCM 30415 / NCIMB 11848 / C-107)</name>
    <dbReference type="NCBI Taxonomy" id="323261"/>
    <lineage>
        <taxon>Bacteria</taxon>
        <taxon>Pseudomonadati</taxon>
        <taxon>Pseudomonadota</taxon>
        <taxon>Gammaproteobacteria</taxon>
        <taxon>Chromatiales</taxon>
        <taxon>Chromatiaceae</taxon>
        <taxon>Nitrosococcus</taxon>
    </lineage>
</organism>
<accession>Q3JAK5</accession>
<sequence length="65" mass="7616">MAVQQNKKTPSKRGMRRAHDVLKKPTFSVDFSSGETHRRHHVTPDGYYRGKKVIFSKDENEEENE</sequence>
<reference key="1">
    <citation type="journal article" date="2006" name="Appl. Environ. Microbiol.">
        <title>Complete genome sequence of the marine, chemolithoautotrophic, ammonia-oxidizing bacterium Nitrosococcus oceani ATCC 19707.</title>
        <authorList>
            <person name="Klotz M.G."/>
            <person name="Arp D.J."/>
            <person name="Chain P.S.G."/>
            <person name="El-Sheikh A.F."/>
            <person name="Hauser L.J."/>
            <person name="Hommes N.G."/>
            <person name="Larimer F.W."/>
            <person name="Malfatti S.A."/>
            <person name="Norton J.M."/>
            <person name="Poret-Peterson A.T."/>
            <person name="Vergez L.M."/>
            <person name="Ward B.B."/>
        </authorList>
    </citation>
    <scope>NUCLEOTIDE SEQUENCE [LARGE SCALE GENOMIC DNA]</scope>
    <source>
        <strain>ATCC 19707 / BCRC 17464 / JCM 30415 / NCIMB 11848 / C-107</strain>
    </source>
</reference>
<feature type="chain" id="PRO_0000225744" description="Large ribosomal subunit protein bL32">
    <location>
        <begin position="1"/>
        <end position="65"/>
    </location>
</feature>
<feature type="region of interest" description="Disordered" evidence="2">
    <location>
        <begin position="1"/>
        <end position="45"/>
    </location>
</feature>
<name>RL32_NITOC</name>
<evidence type="ECO:0000255" key="1">
    <source>
        <dbReference type="HAMAP-Rule" id="MF_00340"/>
    </source>
</evidence>
<evidence type="ECO:0000256" key="2">
    <source>
        <dbReference type="SAM" id="MobiDB-lite"/>
    </source>
</evidence>
<evidence type="ECO:0000305" key="3"/>
<dbReference type="EMBL" id="CP000127">
    <property type="protein sequence ID" value="ABA58141.1"/>
    <property type="molecule type" value="Genomic_DNA"/>
</dbReference>
<dbReference type="RefSeq" id="WP_002810853.1">
    <property type="nucleotide sequence ID" value="NC_007484.1"/>
</dbReference>
<dbReference type="SMR" id="Q3JAK5"/>
<dbReference type="FunCoup" id="Q3JAK5">
    <property type="interactions" value="198"/>
</dbReference>
<dbReference type="STRING" id="323261.Noc_1669"/>
<dbReference type="KEGG" id="noc:Noc_1669"/>
<dbReference type="eggNOG" id="COG0333">
    <property type="taxonomic scope" value="Bacteria"/>
</dbReference>
<dbReference type="HOGENOM" id="CLU_129084_2_1_6"/>
<dbReference type="InParanoid" id="Q3JAK5"/>
<dbReference type="Proteomes" id="UP000006838">
    <property type="component" value="Chromosome"/>
</dbReference>
<dbReference type="GO" id="GO:0015934">
    <property type="term" value="C:large ribosomal subunit"/>
    <property type="evidence" value="ECO:0007669"/>
    <property type="project" value="InterPro"/>
</dbReference>
<dbReference type="GO" id="GO:0003735">
    <property type="term" value="F:structural constituent of ribosome"/>
    <property type="evidence" value="ECO:0007669"/>
    <property type="project" value="InterPro"/>
</dbReference>
<dbReference type="GO" id="GO:0006412">
    <property type="term" value="P:translation"/>
    <property type="evidence" value="ECO:0007669"/>
    <property type="project" value="UniProtKB-UniRule"/>
</dbReference>
<dbReference type="HAMAP" id="MF_00340">
    <property type="entry name" value="Ribosomal_bL32"/>
    <property type="match status" value="1"/>
</dbReference>
<dbReference type="InterPro" id="IPR002677">
    <property type="entry name" value="Ribosomal_bL32"/>
</dbReference>
<dbReference type="InterPro" id="IPR044957">
    <property type="entry name" value="Ribosomal_bL32_bact"/>
</dbReference>
<dbReference type="InterPro" id="IPR011332">
    <property type="entry name" value="Ribosomal_zn-bd"/>
</dbReference>
<dbReference type="NCBIfam" id="TIGR01031">
    <property type="entry name" value="rpmF_bact"/>
    <property type="match status" value="1"/>
</dbReference>
<dbReference type="PANTHER" id="PTHR35534">
    <property type="entry name" value="50S RIBOSOMAL PROTEIN L32"/>
    <property type="match status" value="1"/>
</dbReference>
<dbReference type="PANTHER" id="PTHR35534:SF1">
    <property type="entry name" value="LARGE RIBOSOMAL SUBUNIT PROTEIN BL32"/>
    <property type="match status" value="1"/>
</dbReference>
<dbReference type="Pfam" id="PF01783">
    <property type="entry name" value="Ribosomal_L32p"/>
    <property type="match status" value="1"/>
</dbReference>
<dbReference type="SUPFAM" id="SSF57829">
    <property type="entry name" value="Zn-binding ribosomal proteins"/>
    <property type="match status" value="1"/>
</dbReference>
<protein>
    <recommendedName>
        <fullName evidence="1">Large ribosomal subunit protein bL32</fullName>
    </recommendedName>
    <alternativeName>
        <fullName evidence="3">50S ribosomal protein L32</fullName>
    </alternativeName>
</protein>
<proteinExistence type="inferred from homology"/>
<keyword id="KW-1185">Reference proteome</keyword>
<keyword id="KW-0687">Ribonucleoprotein</keyword>
<keyword id="KW-0689">Ribosomal protein</keyword>
<comment type="similarity">
    <text evidence="1">Belongs to the bacterial ribosomal protein bL32 family.</text>
</comment>